<keyword id="KW-1015">Disulfide bond</keyword>
<keyword id="KW-0325">Glycoprotein</keyword>
<keyword id="KW-0326">Glycosidase</keyword>
<keyword id="KW-0378">Hydrolase</keyword>
<keyword id="KW-1185">Reference proteome</keyword>
<keyword id="KW-0732">Signal</keyword>
<feature type="signal peptide" evidence="5">
    <location>
        <begin position="1"/>
        <end position="22"/>
    </location>
</feature>
<feature type="chain" id="PRO_0000389594" description="Beta-glucosidase 32">
    <location>
        <begin position="23"/>
        <end position="534"/>
    </location>
</feature>
<feature type="active site" description="Proton donor" evidence="3">
    <location>
        <position position="200"/>
    </location>
</feature>
<feature type="active site" description="Nucleophile" evidence="3">
    <location>
        <position position="417"/>
    </location>
</feature>
<feature type="binding site" evidence="3">
    <location>
        <position position="51"/>
    </location>
    <ligand>
        <name>a beta-D-glucoside</name>
        <dbReference type="ChEBI" id="CHEBI:22798"/>
    </ligand>
</feature>
<feature type="binding site" evidence="3">
    <location>
        <position position="154"/>
    </location>
    <ligand>
        <name>a beta-D-glucoside</name>
        <dbReference type="ChEBI" id="CHEBI:22798"/>
    </ligand>
</feature>
<feature type="binding site" evidence="3">
    <location>
        <begin position="199"/>
        <end position="200"/>
    </location>
    <ligand>
        <name>a beta-D-glucoside</name>
        <dbReference type="ChEBI" id="CHEBI:22798"/>
    </ligand>
</feature>
<feature type="binding site" evidence="3">
    <location>
        <position position="344"/>
    </location>
    <ligand>
        <name>a beta-D-glucoside</name>
        <dbReference type="ChEBI" id="CHEBI:22798"/>
    </ligand>
</feature>
<feature type="binding site" evidence="4">
    <location>
        <position position="417"/>
    </location>
    <ligand>
        <name>a beta-D-glucoside</name>
        <dbReference type="ChEBI" id="CHEBI:22798"/>
    </ligand>
</feature>
<feature type="binding site" evidence="3">
    <location>
        <position position="467"/>
    </location>
    <ligand>
        <name>a beta-D-glucoside</name>
        <dbReference type="ChEBI" id="CHEBI:22798"/>
    </ligand>
</feature>
<feature type="binding site" evidence="3">
    <location>
        <begin position="474"/>
        <end position="475"/>
    </location>
    <ligand>
        <name>a beta-D-glucoside</name>
        <dbReference type="ChEBI" id="CHEBI:22798"/>
    </ligand>
</feature>
<feature type="binding site" evidence="2">
    <location>
        <position position="483"/>
    </location>
    <ligand>
        <name>a beta-D-glucoside</name>
        <dbReference type="ChEBI" id="CHEBI:22798"/>
    </ligand>
</feature>
<feature type="glycosylation site" description="N-linked (GlcNAc...) asparagine" evidence="6">
    <location>
        <position position="68"/>
    </location>
</feature>
<feature type="glycosylation site" description="N-linked (GlcNAc...) asparagine" evidence="6">
    <location>
        <position position="374"/>
    </location>
</feature>
<feature type="glycosylation site" description="N-linked (GlcNAc...) asparagine" evidence="6">
    <location>
        <position position="425"/>
    </location>
</feature>
<feature type="disulfide bond" evidence="3">
    <location>
        <begin position="219"/>
        <end position="227"/>
    </location>
</feature>
<accession>Q9FLU8</accession>
<dbReference type="EC" id="3.2.1.21" evidence="1"/>
<dbReference type="EMBL" id="AB010068">
    <property type="protein sequence ID" value="BAB11207.1"/>
    <property type="status" value="ALT_SEQ"/>
    <property type="molecule type" value="Genomic_DNA"/>
</dbReference>
<dbReference type="EMBL" id="CP002688">
    <property type="protein sequence ID" value="AED93324.1"/>
    <property type="molecule type" value="Genomic_DNA"/>
</dbReference>
<dbReference type="RefSeq" id="NP_197843.2">
    <property type="nucleotide sequence ID" value="NM_122363.2"/>
</dbReference>
<dbReference type="SMR" id="Q9FLU8"/>
<dbReference type="FunCoup" id="Q9FLU8">
    <property type="interactions" value="419"/>
</dbReference>
<dbReference type="STRING" id="3702.Q9FLU8"/>
<dbReference type="CAZy" id="GH1">
    <property type="family name" value="Glycoside Hydrolase Family 1"/>
</dbReference>
<dbReference type="GlyCosmos" id="Q9FLU8">
    <property type="glycosylation" value="3 sites, No reported glycans"/>
</dbReference>
<dbReference type="GlyGen" id="Q9FLU8">
    <property type="glycosylation" value="3 sites"/>
</dbReference>
<dbReference type="PaxDb" id="3702-AT5G24550.1"/>
<dbReference type="EnsemblPlants" id="AT5G24550.1">
    <property type="protein sequence ID" value="AT5G24550.1"/>
    <property type="gene ID" value="AT5G24550"/>
</dbReference>
<dbReference type="GeneID" id="832526"/>
<dbReference type="Gramene" id="AT5G24550.1">
    <property type="protein sequence ID" value="AT5G24550.1"/>
    <property type="gene ID" value="AT5G24550"/>
</dbReference>
<dbReference type="KEGG" id="ath:AT5G24550"/>
<dbReference type="Araport" id="AT5G24550"/>
<dbReference type="TAIR" id="AT5G24550">
    <property type="gene designation" value="BGLU32"/>
</dbReference>
<dbReference type="eggNOG" id="KOG0626">
    <property type="taxonomic scope" value="Eukaryota"/>
</dbReference>
<dbReference type="HOGENOM" id="CLU_001859_1_0_1"/>
<dbReference type="InParanoid" id="Q9FLU8"/>
<dbReference type="OMA" id="TCITENG"/>
<dbReference type="OrthoDB" id="65569at2759"/>
<dbReference type="PhylomeDB" id="Q9FLU8"/>
<dbReference type="BioCyc" id="ARA:AT5G24550-MONOMER"/>
<dbReference type="PRO" id="PR:Q9FLU8"/>
<dbReference type="Proteomes" id="UP000006548">
    <property type="component" value="Chromosome 5"/>
</dbReference>
<dbReference type="ExpressionAtlas" id="Q9FLU8">
    <property type="expression patterns" value="differential"/>
</dbReference>
<dbReference type="GO" id="GO:0008422">
    <property type="term" value="F:beta-glucosidase activity"/>
    <property type="evidence" value="ECO:0007669"/>
    <property type="project" value="UniProtKB-EC"/>
</dbReference>
<dbReference type="GO" id="GO:0005975">
    <property type="term" value="P:carbohydrate metabolic process"/>
    <property type="evidence" value="ECO:0007669"/>
    <property type="project" value="InterPro"/>
</dbReference>
<dbReference type="GO" id="GO:0051707">
    <property type="term" value="P:response to other organism"/>
    <property type="evidence" value="ECO:0000270"/>
    <property type="project" value="TAIR"/>
</dbReference>
<dbReference type="FunFam" id="3.20.20.80:FF:000022">
    <property type="entry name" value="Beta-glucosidase 11"/>
    <property type="match status" value="1"/>
</dbReference>
<dbReference type="Gene3D" id="3.20.20.80">
    <property type="entry name" value="Glycosidases"/>
    <property type="match status" value="1"/>
</dbReference>
<dbReference type="InterPro" id="IPR001360">
    <property type="entry name" value="Glyco_hydro_1"/>
</dbReference>
<dbReference type="InterPro" id="IPR033132">
    <property type="entry name" value="Glyco_hydro_1_N_CS"/>
</dbReference>
<dbReference type="InterPro" id="IPR017853">
    <property type="entry name" value="Glycoside_hydrolase_SF"/>
</dbReference>
<dbReference type="PANTHER" id="PTHR10353:SF318">
    <property type="entry name" value="BETA-GLUCOSIDASE 31-RELATED"/>
    <property type="match status" value="1"/>
</dbReference>
<dbReference type="PANTHER" id="PTHR10353">
    <property type="entry name" value="GLYCOSYL HYDROLASE"/>
    <property type="match status" value="1"/>
</dbReference>
<dbReference type="Pfam" id="PF00232">
    <property type="entry name" value="Glyco_hydro_1"/>
    <property type="match status" value="1"/>
</dbReference>
<dbReference type="PRINTS" id="PR00131">
    <property type="entry name" value="GLHYDRLASE1"/>
</dbReference>
<dbReference type="SUPFAM" id="SSF51445">
    <property type="entry name" value="(Trans)glycosidases"/>
    <property type="match status" value="1"/>
</dbReference>
<dbReference type="PROSITE" id="PS00653">
    <property type="entry name" value="GLYCOSYL_HYDROL_F1_2"/>
    <property type="match status" value="1"/>
</dbReference>
<proteinExistence type="evidence at transcript level"/>
<name>BGL32_ARATH</name>
<sequence>MAIKLIALVITICVASWDSAQGRSLRFSTTPLNRYSFPPHFDFGVASSAYQYEGAVEEGGRSPSIWDNFTHAFPERTNMDNGDVAVDFYHRYKDDIKLIKEMNMDSFRFSLSWSRILPSGKLSDGVNKEGVQFYKNLIDELIKNGIKPFVTIYHWDIPQALDDEYGSFLSPRIIDDFRNFARFCFQEFGDKVSMWTTFNEPYVYSVSGYDAGNKAIGRCSKWVNSLCIAGDSGTEPYLVSHNLLLAHAAAVEEFRKCDKISQDAKIGIVLSPYWFEPYDIDSESDKEAVERALVFNIGWHLSPLVFGDYPETIKTTAGNRLPSFTKEQSMMLQNSFDFIGINYYTARFVAHDLHVDLSRPRFTTDQHLQYKLTNRSGDHISSESDGTKILWSYPEGLRKLLNYIKNKYNNPTIYITENGFDDYENGSVTREEIIEDTKRIEYHQNHLQQLQKAITEDGCNVKGYFTWSLLDNFEWEHGYAVRFGLYYVDYKNGLSRHAKNSAKWFKHFLQRSGKPMPLDLFKSVKNWWSAIPMI</sequence>
<gene>
    <name evidence="7" type="primary">BGLU32</name>
    <name evidence="9" type="ordered locus">At5g24550</name>
    <name evidence="10" type="ORF">K18P6.8</name>
</gene>
<protein>
    <recommendedName>
        <fullName evidence="7">Beta-glucosidase 32</fullName>
        <shortName evidence="7">AtBGLU32</shortName>
        <ecNumber evidence="1">3.2.1.21</ecNumber>
    </recommendedName>
</protein>
<evidence type="ECO:0000250" key="1">
    <source>
        <dbReference type="UniProtKB" id="O64879"/>
    </source>
</evidence>
<evidence type="ECO:0000250" key="2">
    <source>
        <dbReference type="UniProtKB" id="Q1XH05"/>
    </source>
</evidence>
<evidence type="ECO:0000250" key="3">
    <source>
        <dbReference type="UniProtKB" id="Q7XSK0"/>
    </source>
</evidence>
<evidence type="ECO:0000250" key="4">
    <source>
        <dbReference type="UniProtKB" id="Q9SPP9"/>
    </source>
</evidence>
<evidence type="ECO:0000255" key="5"/>
<evidence type="ECO:0000255" key="6">
    <source>
        <dbReference type="PROSITE-ProRule" id="PRU00498"/>
    </source>
</evidence>
<evidence type="ECO:0000303" key="7">
    <source>
    </source>
</evidence>
<evidence type="ECO:0000305" key="8"/>
<evidence type="ECO:0000312" key="9">
    <source>
        <dbReference type="Araport" id="AT5G24550"/>
    </source>
</evidence>
<evidence type="ECO:0000312" key="10">
    <source>
        <dbReference type="EMBL" id="BAB11207.1"/>
    </source>
</evidence>
<reference key="1">
    <citation type="journal article" date="1998" name="DNA Res.">
        <title>Structural analysis of Arabidopsis thaliana chromosome 5. IV. Sequence features of the regions of 1,456,315 bp covered by nineteen physically assigned P1 and TAC clones.</title>
        <authorList>
            <person name="Sato S."/>
            <person name="Kaneko T."/>
            <person name="Kotani H."/>
            <person name="Nakamura Y."/>
            <person name="Asamizu E."/>
            <person name="Miyajima N."/>
            <person name="Tabata S."/>
        </authorList>
    </citation>
    <scope>NUCLEOTIDE SEQUENCE [LARGE SCALE GENOMIC DNA]</scope>
    <source>
        <strain>cv. Columbia</strain>
    </source>
</reference>
<reference key="2">
    <citation type="journal article" date="2017" name="Plant J.">
        <title>Araport11: a complete reannotation of the Arabidopsis thaliana reference genome.</title>
        <authorList>
            <person name="Cheng C.Y."/>
            <person name="Krishnakumar V."/>
            <person name="Chan A.P."/>
            <person name="Thibaud-Nissen F."/>
            <person name="Schobel S."/>
            <person name="Town C.D."/>
        </authorList>
    </citation>
    <scope>GENOME REANNOTATION</scope>
    <source>
        <strain>cv. Columbia</strain>
    </source>
</reference>
<reference key="3">
    <citation type="journal article" date="2004" name="Plant Mol. Biol.">
        <title>Functional genomic analysis of Arabidopsis thaliana glycoside hydrolase family 1.</title>
        <authorList>
            <person name="Xu Z."/>
            <person name="Escamilla-Trevino L.L."/>
            <person name="Zeng L."/>
            <person name="Lalgondar M."/>
            <person name="Bevan D.R."/>
            <person name="Winkel B.S.J."/>
            <person name="Mohamed A."/>
            <person name="Cheng C.-L."/>
            <person name="Shih M.-C."/>
            <person name="Poulton J.E."/>
            <person name="Esen A."/>
        </authorList>
    </citation>
    <scope>GENE FAMILY</scope>
    <scope>NOMENCLATURE</scope>
</reference>
<organism>
    <name type="scientific">Arabidopsis thaliana</name>
    <name type="common">Mouse-ear cress</name>
    <dbReference type="NCBI Taxonomy" id="3702"/>
    <lineage>
        <taxon>Eukaryota</taxon>
        <taxon>Viridiplantae</taxon>
        <taxon>Streptophyta</taxon>
        <taxon>Embryophyta</taxon>
        <taxon>Tracheophyta</taxon>
        <taxon>Spermatophyta</taxon>
        <taxon>Magnoliopsida</taxon>
        <taxon>eudicotyledons</taxon>
        <taxon>Gunneridae</taxon>
        <taxon>Pentapetalae</taxon>
        <taxon>rosids</taxon>
        <taxon>malvids</taxon>
        <taxon>Brassicales</taxon>
        <taxon>Brassicaceae</taxon>
        <taxon>Camelineae</taxon>
        <taxon>Arabidopsis</taxon>
    </lineage>
</organism>
<comment type="catalytic activity">
    <reaction evidence="1">
        <text>Hydrolysis of terminal, non-reducing beta-D-glucosyl residues with release of beta-D-glucose.</text>
        <dbReference type="EC" id="3.2.1.21"/>
    </reaction>
</comment>
<comment type="similarity">
    <text evidence="8">Belongs to the glycosyl hydrolase 1 family.</text>
</comment>
<comment type="sequence caution" evidence="8">
    <conflict type="erroneous gene model prediction">
        <sequence resource="EMBL-CDS" id="BAB11207"/>
    </conflict>
</comment>